<reference evidence="6" key="1">
    <citation type="thesis" date="2006" institute="ICAT-FCUL" country="Portugal">
        <title>Molecular analysis of Populus euphratica Oliv. response to moderate heat stress.</title>
        <authorList>
            <person name="Ferreira S."/>
        </authorList>
    </citation>
    <scope>PROTEIN SEQUENCE</scope>
    <source>
        <tissue evidence="4">Leaf</tissue>
    </source>
</reference>
<protein>
    <recommendedName>
        <fullName>Chlorophyll a-b binding protein 2, chloroplastic</fullName>
    </recommendedName>
    <alternativeName>
        <fullName>LHCII type I CAB-2</fullName>
        <shortName>LHCP</shortName>
    </alternativeName>
</protein>
<keyword id="KW-0148">Chlorophyll</keyword>
<keyword id="KW-0150">Chloroplast</keyword>
<keyword id="KW-0157">Chromophore</keyword>
<keyword id="KW-0903">Direct protein sequencing</keyword>
<keyword id="KW-0460">Magnesium</keyword>
<keyword id="KW-0472">Membrane</keyword>
<keyword id="KW-0479">Metal-binding</keyword>
<keyword id="KW-0597">Phosphoprotein</keyword>
<keyword id="KW-0602">Photosynthesis</keyword>
<keyword id="KW-0603">Photosystem I</keyword>
<keyword id="KW-0604">Photosystem II</keyword>
<keyword id="KW-0934">Plastid</keyword>
<keyword id="KW-1185">Reference proteome</keyword>
<keyword id="KW-0793">Thylakoid</keyword>
<keyword id="KW-0812">Transmembrane</keyword>
<organism>
    <name type="scientific">Populus euphratica</name>
    <name type="common">Euphrates poplar</name>
    <dbReference type="NCBI Taxonomy" id="75702"/>
    <lineage>
        <taxon>Eukaryota</taxon>
        <taxon>Viridiplantae</taxon>
        <taxon>Streptophyta</taxon>
        <taxon>Embryophyta</taxon>
        <taxon>Tracheophyta</taxon>
        <taxon>Spermatophyta</taxon>
        <taxon>Magnoliopsida</taxon>
        <taxon>eudicotyledons</taxon>
        <taxon>Gunneridae</taxon>
        <taxon>Pentapetalae</taxon>
        <taxon>rosids</taxon>
        <taxon>fabids</taxon>
        <taxon>Malpighiales</taxon>
        <taxon>Salicaceae</taxon>
        <taxon>Saliceae</taxon>
        <taxon>Populus</taxon>
    </lineage>
</organism>
<comment type="function">
    <text evidence="6">The light-harvesting complex (LHC) functions as a light receptor, it captures and delivers excitation energy to photosystems with which it is closely associated.</text>
</comment>
<comment type="cofactor">
    <text evidence="2">Binds at least 14 chlorophylls (8 Chl-a and 6 Chl-b) and carotenoids such as lutein and neoxanthin.</text>
</comment>
<comment type="subunit">
    <text evidence="6">The LHC complex consists of chlorophyll a-b binding proteins.</text>
</comment>
<comment type="subcellular location">
    <subcellularLocation>
        <location evidence="1">Plastid</location>
        <location evidence="1">Chloroplast thylakoid membrane</location>
        <topology evidence="1">Multi-pass membrane protein</topology>
    </subcellularLocation>
</comment>
<comment type="domain">
    <text evidence="6">The N-terminus of the protein extends into the stroma where it is involved with adhesion of granal membranes and post-translational modifications; both are believed to mediate the distribution of excitation energy between photosystems I and II.</text>
</comment>
<comment type="PTM">
    <text evidence="2">Photoregulated by reversible phosphorylation of its threonine residues.</text>
</comment>
<comment type="similarity">
    <text evidence="3">Belongs to the light-harvesting chlorophyll a/b-binding (LHC) protein family.</text>
</comment>
<accession>P84990</accession>
<sequence length="32" mass="3801">SAPQSIWYGPDRPKNRELEVIHSRFGEAVWFK</sequence>
<dbReference type="Proteomes" id="UP000694918">
    <property type="component" value="Unplaced"/>
</dbReference>
<dbReference type="GO" id="GO:0009535">
    <property type="term" value="C:chloroplast thylakoid membrane"/>
    <property type="evidence" value="ECO:0007669"/>
    <property type="project" value="UniProtKB-SubCell"/>
</dbReference>
<dbReference type="GO" id="GO:0009522">
    <property type="term" value="C:photosystem I"/>
    <property type="evidence" value="ECO:0007669"/>
    <property type="project" value="UniProtKB-KW"/>
</dbReference>
<dbReference type="GO" id="GO:0009523">
    <property type="term" value="C:photosystem II"/>
    <property type="evidence" value="ECO:0007669"/>
    <property type="project" value="UniProtKB-KW"/>
</dbReference>
<dbReference type="GO" id="GO:0016168">
    <property type="term" value="F:chlorophyll binding"/>
    <property type="evidence" value="ECO:0007669"/>
    <property type="project" value="UniProtKB-KW"/>
</dbReference>
<dbReference type="GO" id="GO:0046872">
    <property type="term" value="F:metal ion binding"/>
    <property type="evidence" value="ECO:0007669"/>
    <property type="project" value="UniProtKB-KW"/>
</dbReference>
<dbReference type="GO" id="GO:0015979">
    <property type="term" value="P:photosynthesis"/>
    <property type="evidence" value="ECO:0007669"/>
    <property type="project" value="UniProtKB-KW"/>
</dbReference>
<proteinExistence type="evidence at protein level"/>
<feature type="chain" id="PRO_0000300509" description="Chlorophyll a-b binding protein 2, chloroplastic">
    <location>
        <begin position="1" status="less than"/>
        <end position="32" status="greater than"/>
    </location>
</feature>
<feature type="binding site" description="axial binding residue" evidence="2">
    <location>
        <position position="19"/>
    </location>
    <ligand>
        <name>chlorophyll a</name>
        <dbReference type="ChEBI" id="CHEBI:58416"/>
        <label>1</label>
    </ligand>
    <ligandPart>
        <name>Mg</name>
        <dbReference type="ChEBI" id="CHEBI:25107"/>
    </ligandPart>
</feature>
<feature type="binding site" description="axial binding residue" evidence="2">
    <location>
        <position position="22"/>
    </location>
    <ligand>
        <name>chlorophyll a</name>
        <dbReference type="ChEBI" id="CHEBI:58416"/>
        <label>2</label>
    </ligand>
    <ligandPart>
        <name>Mg</name>
        <dbReference type="ChEBI" id="CHEBI:25107"/>
    </ligandPart>
</feature>
<feature type="binding site" evidence="2">
    <location>
        <position position="24"/>
    </location>
    <ligand>
        <name>chlorophyll b</name>
        <dbReference type="ChEBI" id="CHEBI:61721"/>
        <label>2</label>
    </ligand>
</feature>
<feature type="non-consecutive residues" evidence="5">
    <location>
        <begin position="14"/>
        <end position="15"/>
    </location>
</feature>
<feature type="non-consecutive residues" evidence="5">
    <location>
        <begin position="24"/>
        <end position="25"/>
    </location>
</feature>
<feature type="non-terminal residue" evidence="5">
    <location>
        <position position="1"/>
    </location>
</feature>
<feature type="non-terminal residue" evidence="5">
    <location>
        <position position="32"/>
    </location>
</feature>
<name>CB22_POPEU</name>
<evidence type="ECO:0000250" key="1"/>
<evidence type="ECO:0000250" key="2">
    <source>
        <dbReference type="UniProtKB" id="P12333"/>
    </source>
</evidence>
<evidence type="ECO:0000255" key="3"/>
<evidence type="ECO:0000269" key="4">
    <source ref="1"/>
</evidence>
<evidence type="ECO:0000303" key="5">
    <source ref="1"/>
</evidence>
<evidence type="ECO:0000305" key="6"/>